<gene>
    <name type="primary">eif3H</name>
    <name type="synonym">eif3s3</name>
    <name type="ORF">DDB_G0281153</name>
</gene>
<accession>Q54UD0</accession>
<evidence type="ECO:0000255" key="1">
    <source>
        <dbReference type="HAMAP-Rule" id="MF_03007"/>
    </source>
</evidence>
<evidence type="ECO:0000255" key="2">
    <source>
        <dbReference type="PROSITE-ProRule" id="PRU01182"/>
    </source>
</evidence>
<comment type="function">
    <text evidence="1">Component of the eukaryotic translation initiation factor 3 (eIF-3) complex, which is involved in protein synthesis of a specialized repertoire of mRNAs and, together with other initiation factors, stimulates binding of mRNA and methionyl-tRNAi to the 40S ribosome. The eIF-3 complex specifically targets and initiates translation of a subset of mRNAs involved in cell proliferation.</text>
</comment>
<comment type="subunit">
    <text evidence="1">Component of the eukaryotic translation initiation factor 3 (eIF-3) complex.</text>
</comment>
<comment type="subcellular location">
    <subcellularLocation>
        <location evidence="1">Cytoplasm</location>
    </subcellularLocation>
</comment>
<comment type="similarity">
    <text evidence="1">Belongs to the eIF-3 subunit H family.</text>
</comment>
<keyword id="KW-0963">Cytoplasm</keyword>
<keyword id="KW-0396">Initiation factor</keyword>
<keyword id="KW-0648">Protein biosynthesis</keyword>
<keyword id="KW-1185">Reference proteome</keyword>
<dbReference type="EMBL" id="AAFI02000040">
    <property type="protein sequence ID" value="EAL66873.1"/>
    <property type="molecule type" value="Genomic_DNA"/>
</dbReference>
<dbReference type="RefSeq" id="XP_640846.1">
    <property type="nucleotide sequence ID" value="XM_635754.1"/>
</dbReference>
<dbReference type="SMR" id="Q54UD0"/>
<dbReference type="FunCoup" id="Q54UD0">
    <property type="interactions" value="1192"/>
</dbReference>
<dbReference type="STRING" id="44689.Q54UD0"/>
<dbReference type="MEROPS" id="M67.971"/>
<dbReference type="PaxDb" id="44689-DDB0233918"/>
<dbReference type="EnsemblProtists" id="EAL66873">
    <property type="protein sequence ID" value="EAL66873"/>
    <property type="gene ID" value="DDB_G0281153"/>
</dbReference>
<dbReference type="GeneID" id="8622902"/>
<dbReference type="KEGG" id="ddi:DDB_G0281153"/>
<dbReference type="dictyBase" id="DDB_G0281153">
    <property type="gene designation" value="eif3H"/>
</dbReference>
<dbReference type="VEuPathDB" id="AmoebaDB:DDB_G0281153"/>
<dbReference type="eggNOG" id="KOG1560">
    <property type="taxonomic scope" value="Eukaryota"/>
</dbReference>
<dbReference type="HOGENOM" id="CLU_044094_1_0_1"/>
<dbReference type="InParanoid" id="Q54UD0"/>
<dbReference type="OMA" id="WYQSTYF"/>
<dbReference type="PhylomeDB" id="Q54UD0"/>
<dbReference type="Reactome" id="R-DDI-156827">
    <property type="pathway name" value="L13a-mediated translational silencing of Ceruloplasmin expression"/>
</dbReference>
<dbReference type="Reactome" id="R-DDI-72689">
    <property type="pathway name" value="Formation of a pool of free 40S subunits"/>
</dbReference>
<dbReference type="Reactome" id="R-DDI-72695">
    <property type="pathway name" value="Formation of the ternary complex, and subsequently, the 43S complex"/>
</dbReference>
<dbReference type="Reactome" id="R-DDI-72702">
    <property type="pathway name" value="Ribosomal scanning and start codon recognition"/>
</dbReference>
<dbReference type="PRO" id="PR:Q54UD0"/>
<dbReference type="Proteomes" id="UP000002195">
    <property type="component" value="Chromosome 3"/>
</dbReference>
<dbReference type="GO" id="GO:0016282">
    <property type="term" value="C:eukaryotic 43S preinitiation complex"/>
    <property type="evidence" value="ECO:0000318"/>
    <property type="project" value="GO_Central"/>
</dbReference>
<dbReference type="GO" id="GO:0033290">
    <property type="term" value="C:eukaryotic 48S preinitiation complex"/>
    <property type="evidence" value="ECO:0007669"/>
    <property type="project" value="UniProtKB-UniRule"/>
</dbReference>
<dbReference type="GO" id="GO:0005852">
    <property type="term" value="C:eukaryotic translation initiation factor 3 complex"/>
    <property type="evidence" value="ECO:0000318"/>
    <property type="project" value="GO_Central"/>
</dbReference>
<dbReference type="GO" id="GO:0008237">
    <property type="term" value="F:metallopeptidase activity"/>
    <property type="evidence" value="ECO:0000318"/>
    <property type="project" value="GO_Central"/>
</dbReference>
<dbReference type="GO" id="GO:0003743">
    <property type="term" value="F:translation initiation factor activity"/>
    <property type="evidence" value="ECO:0007669"/>
    <property type="project" value="UniProtKB-UniRule"/>
</dbReference>
<dbReference type="GO" id="GO:0001732">
    <property type="term" value="P:formation of cytoplasmic translation initiation complex"/>
    <property type="evidence" value="ECO:0007669"/>
    <property type="project" value="UniProtKB-UniRule"/>
</dbReference>
<dbReference type="GO" id="GO:0006413">
    <property type="term" value="P:translational initiation"/>
    <property type="evidence" value="ECO:0000318"/>
    <property type="project" value="GO_Central"/>
</dbReference>
<dbReference type="CDD" id="cd08065">
    <property type="entry name" value="MPN_eIF3h"/>
    <property type="match status" value="1"/>
</dbReference>
<dbReference type="FunFam" id="3.40.140.10:FF:000052">
    <property type="entry name" value="Eukaryotic translation initiation factor 3 subunit H"/>
    <property type="match status" value="1"/>
</dbReference>
<dbReference type="Gene3D" id="3.40.140.10">
    <property type="entry name" value="Cytidine Deaminase, domain 2"/>
    <property type="match status" value="1"/>
</dbReference>
<dbReference type="HAMAP" id="MF_03007">
    <property type="entry name" value="eIF3h"/>
    <property type="match status" value="1"/>
</dbReference>
<dbReference type="InterPro" id="IPR027524">
    <property type="entry name" value="eIF3h"/>
</dbReference>
<dbReference type="InterPro" id="IPR045810">
    <property type="entry name" value="eIF3h_C"/>
</dbReference>
<dbReference type="InterPro" id="IPR000555">
    <property type="entry name" value="JAMM/MPN+_dom"/>
</dbReference>
<dbReference type="InterPro" id="IPR050242">
    <property type="entry name" value="JAMM_MPN+_peptidase_M67A"/>
</dbReference>
<dbReference type="InterPro" id="IPR037518">
    <property type="entry name" value="MPN"/>
</dbReference>
<dbReference type="PANTHER" id="PTHR10410">
    <property type="entry name" value="EUKARYOTIC TRANSLATION INITIATION FACTOR 3 -RELATED"/>
    <property type="match status" value="1"/>
</dbReference>
<dbReference type="Pfam" id="PF19445">
    <property type="entry name" value="eIF3h_C"/>
    <property type="match status" value="1"/>
</dbReference>
<dbReference type="Pfam" id="PF01398">
    <property type="entry name" value="JAB"/>
    <property type="match status" value="1"/>
</dbReference>
<dbReference type="SMART" id="SM00232">
    <property type="entry name" value="JAB_MPN"/>
    <property type="match status" value="1"/>
</dbReference>
<dbReference type="PROSITE" id="PS50249">
    <property type="entry name" value="MPN"/>
    <property type="match status" value="1"/>
</dbReference>
<proteinExistence type="inferred from homology"/>
<sequence>MDIDEQIIQDYSNSKLDVVQIDGLVVLKIIKQCKEYLPELVPGQLLGLDIGTSLEVSNCFPFPPRDQEDENSESIADYQLEMMRFLREVNIDSNTVGWYTPTYLNSFFNESVIETQYNYQATINQKCVVIVYDPIKTSQGTLSLKCYRLTQSFMELFKDQSFSRERLDQANLSFNDIFEQIPIKIHNSQLINALLYEFDGASNNLTNSFDRLNISNNIYLEKVVEGMTDCLESLNQELNKVYINQRNIQTQKTNYIQQKFLEGQKVDEDELASMIKPLNPPSKLTSLLLTNQINNYTDQIHSFSGNSLTKLSLLKDLQK</sequence>
<protein>
    <recommendedName>
        <fullName evidence="1">Eukaryotic translation initiation factor 3 subunit H</fullName>
        <shortName evidence="1">eIF3h</shortName>
    </recommendedName>
    <alternativeName>
        <fullName evidence="1">Eukaryotic translation initiation factor 3 subunit 3</fullName>
    </alternativeName>
    <alternativeName>
        <fullName>eIF-3-gamma</fullName>
    </alternativeName>
</protein>
<name>EIF3H_DICDI</name>
<feature type="chain" id="PRO_0000330326" description="Eukaryotic translation initiation factor 3 subunit H">
    <location>
        <begin position="1"/>
        <end position="319"/>
    </location>
</feature>
<feature type="domain" description="MPN" evidence="2">
    <location>
        <begin position="19"/>
        <end position="153"/>
    </location>
</feature>
<reference key="1">
    <citation type="journal article" date="2005" name="Nature">
        <title>The genome of the social amoeba Dictyostelium discoideum.</title>
        <authorList>
            <person name="Eichinger L."/>
            <person name="Pachebat J.A."/>
            <person name="Gloeckner G."/>
            <person name="Rajandream M.A."/>
            <person name="Sucgang R."/>
            <person name="Berriman M."/>
            <person name="Song J."/>
            <person name="Olsen R."/>
            <person name="Szafranski K."/>
            <person name="Xu Q."/>
            <person name="Tunggal B."/>
            <person name="Kummerfeld S."/>
            <person name="Madera M."/>
            <person name="Konfortov B.A."/>
            <person name="Rivero F."/>
            <person name="Bankier A.T."/>
            <person name="Lehmann R."/>
            <person name="Hamlin N."/>
            <person name="Davies R."/>
            <person name="Gaudet P."/>
            <person name="Fey P."/>
            <person name="Pilcher K."/>
            <person name="Chen G."/>
            <person name="Saunders D."/>
            <person name="Sodergren E.J."/>
            <person name="Davis P."/>
            <person name="Kerhornou A."/>
            <person name="Nie X."/>
            <person name="Hall N."/>
            <person name="Anjard C."/>
            <person name="Hemphill L."/>
            <person name="Bason N."/>
            <person name="Farbrother P."/>
            <person name="Desany B."/>
            <person name="Just E."/>
            <person name="Morio T."/>
            <person name="Rost R."/>
            <person name="Churcher C.M."/>
            <person name="Cooper J."/>
            <person name="Haydock S."/>
            <person name="van Driessche N."/>
            <person name="Cronin A."/>
            <person name="Goodhead I."/>
            <person name="Muzny D.M."/>
            <person name="Mourier T."/>
            <person name="Pain A."/>
            <person name="Lu M."/>
            <person name="Harper D."/>
            <person name="Lindsay R."/>
            <person name="Hauser H."/>
            <person name="James K.D."/>
            <person name="Quiles M."/>
            <person name="Madan Babu M."/>
            <person name="Saito T."/>
            <person name="Buchrieser C."/>
            <person name="Wardroper A."/>
            <person name="Felder M."/>
            <person name="Thangavelu M."/>
            <person name="Johnson D."/>
            <person name="Knights A."/>
            <person name="Loulseged H."/>
            <person name="Mungall K.L."/>
            <person name="Oliver K."/>
            <person name="Price C."/>
            <person name="Quail M.A."/>
            <person name="Urushihara H."/>
            <person name="Hernandez J."/>
            <person name="Rabbinowitsch E."/>
            <person name="Steffen D."/>
            <person name="Sanders M."/>
            <person name="Ma J."/>
            <person name="Kohara Y."/>
            <person name="Sharp S."/>
            <person name="Simmonds M.N."/>
            <person name="Spiegler S."/>
            <person name="Tivey A."/>
            <person name="Sugano S."/>
            <person name="White B."/>
            <person name="Walker D."/>
            <person name="Woodward J.R."/>
            <person name="Winckler T."/>
            <person name="Tanaka Y."/>
            <person name="Shaulsky G."/>
            <person name="Schleicher M."/>
            <person name="Weinstock G.M."/>
            <person name="Rosenthal A."/>
            <person name="Cox E.C."/>
            <person name="Chisholm R.L."/>
            <person name="Gibbs R.A."/>
            <person name="Loomis W.F."/>
            <person name="Platzer M."/>
            <person name="Kay R.R."/>
            <person name="Williams J.G."/>
            <person name="Dear P.H."/>
            <person name="Noegel A.A."/>
            <person name="Barrell B.G."/>
            <person name="Kuspa A."/>
        </authorList>
    </citation>
    <scope>NUCLEOTIDE SEQUENCE [LARGE SCALE GENOMIC DNA]</scope>
    <source>
        <strain>AX4</strain>
    </source>
</reference>
<organism>
    <name type="scientific">Dictyostelium discoideum</name>
    <name type="common">Social amoeba</name>
    <dbReference type="NCBI Taxonomy" id="44689"/>
    <lineage>
        <taxon>Eukaryota</taxon>
        <taxon>Amoebozoa</taxon>
        <taxon>Evosea</taxon>
        <taxon>Eumycetozoa</taxon>
        <taxon>Dictyostelia</taxon>
        <taxon>Dictyosteliales</taxon>
        <taxon>Dictyosteliaceae</taxon>
        <taxon>Dictyostelium</taxon>
    </lineage>
</organism>